<proteinExistence type="inferred from homology"/>
<organism>
    <name type="scientific">Prochlorococcus marinus (strain MIT 9301)</name>
    <dbReference type="NCBI Taxonomy" id="167546"/>
    <lineage>
        <taxon>Bacteria</taxon>
        <taxon>Bacillati</taxon>
        <taxon>Cyanobacteriota</taxon>
        <taxon>Cyanophyceae</taxon>
        <taxon>Synechococcales</taxon>
        <taxon>Prochlorococcaceae</taxon>
        <taxon>Prochlorococcus</taxon>
    </lineage>
</organism>
<protein>
    <recommendedName>
        <fullName evidence="1">Large ribosomal subunit protein bL33</fullName>
    </recommendedName>
    <alternativeName>
        <fullName evidence="3">50S ribosomal protein L33</fullName>
    </alternativeName>
</protein>
<dbReference type="EMBL" id="CP000576">
    <property type="protein sequence ID" value="ABO17613.1"/>
    <property type="status" value="ALT_INIT"/>
    <property type="molecule type" value="Genomic_DNA"/>
</dbReference>
<dbReference type="RefSeq" id="WP_041484759.1">
    <property type="nucleotide sequence ID" value="NC_009091.1"/>
</dbReference>
<dbReference type="SMR" id="A3PCY8"/>
<dbReference type="STRING" id="167546.P9301_09901"/>
<dbReference type="KEGG" id="pmg:P9301_09901"/>
<dbReference type="eggNOG" id="COG0267">
    <property type="taxonomic scope" value="Bacteria"/>
</dbReference>
<dbReference type="HOGENOM" id="CLU_190949_3_0_3"/>
<dbReference type="OrthoDB" id="9801333at2"/>
<dbReference type="Proteomes" id="UP000001430">
    <property type="component" value="Chromosome"/>
</dbReference>
<dbReference type="GO" id="GO:0005737">
    <property type="term" value="C:cytoplasm"/>
    <property type="evidence" value="ECO:0007669"/>
    <property type="project" value="UniProtKB-ARBA"/>
</dbReference>
<dbReference type="GO" id="GO:1990904">
    <property type="term" value="C:ribonucleoprotein complex"/>
    <property type="evidence" value="ECO:0007669"/>
    <property type="project" value="UniProtKB-KW"/>
</dbReference>
<dbReference type="GO" id="GO:0005840">
    <property type="term" value="C:ribosome"/>
    <property type="evidence" value="ECO:0007669"/>
    <property type="project" value="UniProtKB-KW"/>
</dbReference>
<dbReference type="GO" id="GO:0003735">
    <property type="term" value="F:structural constituent of ribosome"/>
    <property type="evidence" value="ECO:0007669"/>
    <property type="project" value="InterPro"/>
</dbReference>
<dbReference type="GO" id="GO:0006412">
    <property type="term" value="P:translation"/>
    <property type="evidence" value="ECO:0007669"/>
    <property type="project" value="UniProtKB-UniRule"/>
</dbReference>
<dbReference type="Gene3D" id="2.20.28.120">
    <property type="entry name" value="Ribosomal protein L33"/>
    <property type="match status" value="1"/>
</dbReference>
<dbReference type="HAMAP" id="MF_00294">
    <property type="entry name" value="Ribosomal_bL33"/>
    <property type="match status" value="1"/>
</dbReference>
<dbReference type="InterPro" id="IPR001705">
    <property type="entry name" value="Ribosomal_bL33"/>
</dbReference>
<dbReference type="InterPro" id="IPR038584">
    <property type="entry name" value="Ribosomal_bL33_sf"/>
</dbReference>
<dbReference type="InterPro" id="IPR011332">
    <property type="entry name" value="Ribosomal_zn-bd"/>
</dbReference>
<dbReference type="NCBIfam" id="NF001764">
    <property type="entry name" value="PRK00504.1"/>
    <property type="match status" value="1"/>
</dbReference>
<dbReference type="NCBIfam" id="NF001860">
    <property type="entry name" value="PRK00595.1"/>
    <property type="match status" value="1"/>
</dbReference>
<dbReference type="NCBIfam" id="TIGR01023">
    <property type="entry name" value="rpmG_bact"/>
    <property type="match status" value="1"/>
</dbReference>
<dbReference type="PANTHER" id="PTHR43168">
    <property type="entry name" value="50S RIBOSOMAL PROTEIN L33, CHLOROPLASTIC"/>
    <property type="match status" value="1"/>
</dbReference>
<dbReference type="PANTHER" id="PTHR43168:SF2">
    <property type="entry name" value="LARGE RIBOSOMAL SUBUNIT PROTEIN BL33C"/>
    <property type="match status" value="1"/>
</dbReference>
<dbReference type="Pfam" id="PF00471">
    <property type="entry name" value="Ribosomal_L33"/>
    <property type="match status" value="1"/>
</dbReference>
<dbReference type="SUPFAM" id="SSF57829">
    <property type="entry name" value="Zn-binding ribosomal proteins"/>
    <property type="match status" value="1"/>
</dbReference>
<reference key="1">
    <citation type="journal article" date="2007" name="PLoS Genet.">
        <title>Patterns and implications of gene gain and loss in the evolution of Prochlorococcus.</title>
        <authorList>
            <person name="Kettler G.C."/>
            <person name="Martiny A.C."/>
            <person name="Huang K."/>
            <person name="Zucker J."/>
            <person name="Coleman M.L."/>
            <person name="Rodrigue S."/>
            <person name="Chen F."/>
            <person name="Lapidus A."/>
            <person name="Ferriera S."/>
            <person name="Johnson J."/>
            <person name="Steglich C."/>
            <person name="Church G.M."/>
            <person name="Richardson P."/>
            <person name="Chisholm S.W."/>
        </authorList>
    </citation>
    <scope>NUCLEOTIDE SEQUENCE [LARGE SCALE GENOMIC DNA]</scope>
    <source>
        <strain>MIT 9301</strain>
    </source>
</reference>
<keyword id="KW-1185">Reference proteome</keyword>
<keyword id="KW-0687">Ribonucleoprotein</keyword>
<keyword id="KW-0689">Ribosomal protein</keyword>
<evidence type="ECO:0000255" key="1">
    <source>
        <dbReference type="HAMAP-Rule" id="MF_00294"/>
    </source>
</evidence>
<evidence type="ECO:0000256" key="2">
    <source>
        <dbReference type="SAM" id="MobiDB-lite"/>
    </source>
</evidence>
<evidence type="ECO:0000305" key="3"/>
<feature type="chain" id="PRO_0000356611" description="Large ribosomal subunit protein bL33">
    <location>
        <begin position="1"/>
        <end position="64"/>
    </location>
</feature>
<feature type="region of interest" description="Disordered" evidence="2">
    <location>
        <begin position="16"/>
        <end position="42"/>
    </location>
</feature>
<feature type="compositionally biased region" description="Basic and acidic residues" evidence="2">
    <location>
        <begin position="16"/>
        <end position="25"/>
    </location>
</feature>
<feature type="compositionally biased region" description="Basic and acidic residues" evidence="2">
    <location>
        <begin position="33"/>
        <end position="42"/>
    </location>
</feature>
<comment type="similarity">
    <text evidence="1">Belongs to the bacterial ribosomal protein bL33 family.</text>
</comment>
<comment type="sequence caution" evidence="3">
    <conflict type="erroneous initiation">
        <sequence resource="EMBL-CDS" id="ABO17613"/>
    </conflict>
</comment>
<sequence length="64" mass="7488">MAKKGTRVVVTLECTEARTSSDPKRSNGVSRYTTEKNRRNTTERLELKKFNPHLNRMTIHKEIK</sequence>
<gene>
    <name evidence="1" type="primary">rpmG</name>
    <name evidence="1" type="synonym">rpl33</name>
    <name type="ordered locus">P9301_09901</name>
</gene>
<name>RL33_PROM0</name>
<accession>A3PCY8</accession>